<gene>
    <name evidence="1" type="primary">mraY</name>
    <name type="ordered locus">Glov_0673</name>
</gene>
<organism>
    <name type="scientific">Trichlorobacter lovleyi (strain ATCC BAA-1151 / DSM 17278 / SZ)</name>
    <name type="common">Geobacter lovleyi</name>
    <dbReference type="NCBI Taxonomy" id="398767"/>
    <lineage>
        <taxon>Bacteria</taxon>
        <taxon>Pseudomonadati</taxon>
        <taxon>Thermodesulfobacteriota</taxon>
        <taxon>Desulfuromonadia</taxon>
        <taxon>Geobacterales</taxon>
        <taxon>Geobacteraceae</taxon>
        <taxon>Trichlorobacter</taxon>
    </lineage>
</organism>
<sequence>MLFHLFYPLASNLKILNIFKYLTFRTIYAMITALIVCFVLGPWIIRKLEGLQARQVIRTDGPESHLEKQGTPTMGGLIILTAIILPTLLWADLTNVYIWLTLFIIVGYGLIGFMDDYLKVVKKNTKGLSARQKMFWQVLLAGGVAVFLYVTPGFNEMLYVPFFKNFHPDLGIFFIPFVTLVIVGASNAVNLTDGLDGLAIGPVAINAATYMLFAYVAGHATLSAYLQIPRVVGAGELAVICGAMVGAGLGFLWFNSYPAEVFMGDVGSLSLGGTLGVIAVLTKQEILLVIVGGIFVIEALSVIFQVGSYKYRGKRIFRMAPIHHHFELKGVAEPKIIVRFWIITIILALVAISTLKMR</sequence>
<evidence type="ECO:0000255" key="1">
    <source>
        <dbReference type="HAMAP-Rule" id="MF_00038"/>
    </source>
</evidence>
<keyword id="KW-0131">Cell cycle</keyword>
<keyword id="KW-0132">Cell division</keyword>
<keyword id="KW-0997">Cell inner membrane</keyword>
<keyword id="KW-1003">Cell membrane</keyword>
<keyword id="KW-0133">Cell shape</keyword>
<keyword id="KW-0961">Cell wall biogenesis/degradation</keyword>
<keyword id="KW-0460">Magnesium</keyword>
<keyword id="KW-0472">Membrane</keyword>
<keyword id="KW-0479">Metal-binding</keyword>
<keyword id="KW-0573">Peptidoglycan synthesis</keyword>
<keyword id="KW-1185">Reference proteome</keyword>
<keyword id="KW-0808">Transferase</keyword>
<keyword id="KW-0812">Transmembrane</keyword>
<keyword id="KW-1133">Transmembrane helix</keyword>
<accession>B3E3Y5</accession>
<protein>
    <recommendedName>
        <fullName evidence="1">Phospho-N-acetylmuramoyl-pentapeptide-transferase</fullName>
        <ecNumber evidence="1">2.7.8.13</ecNumber>
    </recommendedName>
    <alternativeName>
        <fullName evidence="1">UDP-MurNAc-pentapeptide phosphotransferase</fullName>
    </alternativeName>
</protein>
<proteinExistence type="inferred from homology"/>
<dbReference type="EC" id="2.7.8.13" evidence="1"/>
<dbReference type="EMBL" id="CP001089">
    <property type="protein sequence ID" value="ACD94399.1"/>
    <property type="molecule type" value="Genomic_DNA"/>
</dbReference>
<dbReference type="RefSeq" id="WP_012468755.1">
    <property type="nucleotide sequence ID" value="NC_010814.1"/>
</dbReference>
<dbReference type="SMR" id="B3E3Y5"/>
<dbReference type="STRING" id="398767.Glov_0673"/>
<dbReference type="KEGG" id="glo:Glov_0673"/>
<dbReference type="eggNOG" id="COG0472">
    <property type="taxonomic scope" value="Bacteria"/>
</dbReference>
<dbReference type="HOGENOM" id="CLU_023982_0_0_7"/>
<dbReference type="OrthoDB" id="9805475at2"/>
<dbReference type="UniPathway" id="UPA00219"/>
<dbReference type="Proteomes" id="UP000002420">
    <property type="component" value="Chromosome"/>
</dbReference>
<dbReference type="GO" id="GO:0005886">
    <property type="term" value="C:plasma membrane"/>
    <property type="evidence" value="ECO:0007669"/>
    <property type="project" value="UniProtKB-SubCell"/>
</dbReference>
<dbReference type="GO" id="GO:0046872">
    <property type="term" value="F:metal ion binding"/>
    <property type="evidence" value="ECO:0007669"/>
    <property type="project" value="UniProtKB-KW"/>
</dbReference>
<dbReference type="GO" id="GO:0008963">
    <property type="term" value="F:phospho-N-acetylmuramoyl-pentapeptide-transferase activity"/>
    <property type="evidence" value="ECO:0007669"/>
    <property type="project" value="UniProtKB-UniRule"/>
</dbReference>
<dbReference type="GO" id="GO:0051992">
    <property type="term" value="F:UDP-N-acetylmuramoyl-L-alanyl-D-glutamyl-meso-2,6-diaminopimelyl-D-alanyl-D-alanine:undecaprenyl-phosphate transferase activity"/>
    <property type="evidence" value="ECO:0007669"/>
    <property type="project" value="RHEA"/>
</dbReference>
<dbReference type="GO" id="GO:0051301">
    <property type="term" value="P:cell division"/>
    <property type="evidence" value="ECO:0007669"/>
    <property type="project" value="UniProtKB-KW"/>
</dbReference>
<dbReference type="GO" id="GO:0071555">
    <property type="term" value="P:cell wall organization"/>
    <property type="evidence" value="ECO:0007669"/>
    <property type="project" value="UniProtKB-KW"/>
</dbReference>
<dbReference type="GO" id="GO:0009252">
    <property type="term" value="P:peptidoglycan biosynthetic process"/>
    <property type="evidence" value="ECO:0007669"/>
    <property type="project" value="UniProtKB-UniRule"/>
</dbReference>
<dbReference type="GO" id="GO:0008360">
    <property type="term" value="P:regulation of cell shape"/>
    <property type="evidence" value="ECO:0007669"/>
    <property type="project" value="UniProtKB-KW"/>
</dbReference>
<dbReference type="CDD" id="cd06852">
    <property type="entry name" value="GT_MraY"/>
    <property type="match status" value="1"/>
</dbReference>
<dbReference type="HAMAP" id="MF_00038">
    <property type="entry name" value="MraY"/>
    <property type="match status" value="1"/>
</dbReference>
<dbReference type="InterPro" id="IPR000715">
    <property type="entry name" value="Glycosyl_transferase_4"/>
</dbReference>
<dbReference type="InterPro" id="IPR003524">
    <property type="entry name" value="PNAcMuramoyl-5peptid_Trfase"/>
</dbReference>
<dbReference type="InterPro" id="IPR018480">
    <property type="entry name" value="PNAcMuramoyl-5peptid_Trfase_CS"/>
</dbReference>
<dbReference type="NCBIfam" id="TIGR00445">
    <property type="entry name" value="mraY"/>
    <property type="match status" value="1"/>
</dbReference>
<dbReference type="PANTHER" id="PTHR22926">
    <property type="entry name" value="PHOSPHO-N-ACETYLMURAMOYL-PENTAPEPTIDE-TRANSFERASE"/>
    <property type="match status" value="1"/>
</dbReference>
<dbReference type="PANTHER" id="PTHR22926:SF5">
    <property type="entry name" value="PHOSPHO-N-ACETYLMURAMOYL-PENTAPEPTIDE-TRANSFERASE HOMOLOG"/>
    <property type="match status" value="1"/>
</dbReference>
<dbReference type="Pfam" id="PF00953">
    <property type="entry name" value="Glycos_transf_4"/>
    <property type="match status" value="1"/>
</dbReference>
<dbReference type="Pfam" id="PF10555">
    <property type="entry name" value="MraY_sig1"/>
    <property type="match status" value="1"/>
</dbReference>
<dbReference type="PROSITE" id="PS01347">
    <property type="entry name" value="MRAY_1"/>
    <property type="match status" value="1"/>
</dbReference>
<dbReference type="PROSITE" id="PS01348">
    <property type="entry name" value="MRAY_2"/>
    <property type="match status" value="1"/>
</dbReference>
<feature type="chain" id="PRO_1000090629" description="Phospho-N-acetylmuramoyl-pentapeptide-transferase">
    <location>
        <begin position="1"/>
        <end position="358"/>
    </location>
</feature>
<feature type="transmembrane region" description="Helical" evidence="1">
    <location>
        <begin position="26"/>
        <end position="46"/>
    </location>
</feature>
<feature type="transmembrane region" description="Helical" evidence="1">
    <location>
        <begin position="71"/>
        <end position="91"/>
    </location>
</feature>
<feature type="transmembrane region" description="Helical" evidence="1">
    <location>
        <begin position="93"/>
        <end position="113"/>
    </location>
</feature>
<feature type="transmembrane region" description="Helical" evidence="1">
    <location>
        <begin position="134"/>
        <end position="154"/>
    </location>
</feature>
<feature type="transmembrane region" description="Helical" evidence="1">
    <location>
        <begin position="170"/>
        <end position="190"/>
    </location>
</feature>
<feature type="transmembrane region" description="Helical" evidence="1">
    <location>
        <begin position="197"/>
        <end position="217"/>
    </location>
</feature>
<feature type="transmembrane region" description="Helical" evidence="1">
    <location>
        <begin position="234"/>
        <end position="254"/>
    </location>
</feature>
<feature type="transmembrane region" description="Helical" evidence="1">
    <location>
        <begin position="261"/>
        <end position="281"/>
    </location>
</feature>
<feature type="transmembrane region" description="Helical" evidence="1">
    <location>
        <begin position="286"/>
        <end position="306"/>
    </location>
</feature>
<feature type="transmembrane region" description="Helical" evidence="1">
    <location>
        <begin position="335"/>
        <end position="355"/>
    </location>
</feature>
<comment type="function">
    <text evidence="1">Catalyzes the initial step of the lipid cycle reactions in the biosynthesis of the cell wall peptidoglycan: transfers peptidoglycan precursor phospho-MurNAc-pentapeptide from UDP-MurNAc-pentapeptide onto the lipid carrier undecaprenyl phosphate, yielding undecaprenyl-pyrophosphoryl-MurNAc-pentapeptide, known as lipid I.</text>
</comment>
<comment type="catalytic activity">
    <reaction evidence="1">
        <text>UDP-N-acetyl-alpha-D-muramoyl-L-alanyl-gamma-D-glutamyl-meso-2,6-diaminopimeloyl-D-alanyl-D-alanine + di-trans,octa-cis-undecaprenyl phosphate = di-trans,octa-cis-undecaprenyl diphospho-N-acetyl-alpha-D-muramoyl-L-alanyl-D-glutamyl-meso-2,6-diaminopimeloyl-D-alanyl-D-alanine + UMP</text>
        <dbReference type="Rhea" id="RHEA:28386"/>
        <dbReference type="ChEBI" id="CHEBI:57865"/>
        <dbReference type="ChEBI" id="CHEBI:60392"/>
        <dbReference type="ChEBI" id="CHEBI:61386"/>
        <dbReference type="ChEBI" id="CHEBI:61387"/>
        <dbReference type="EC" id="2.7.8.13"/>
    </reaction>
</comment>
<comment type="cofactor">
    <cofactor evidence="1">
        <name>Mg(2+)</name>
        <dbReference type="ChEBI" id="CHEBI:18420"/>
    </cofactor>
</comment>
<comment type="pathway">
    <text evidence="1">Cell wall biogenesis; peptidoglycan biosynthesis.</text>
</comment>
<comment type="subcellular location">
    <subcellularLocation>
        <location evidence="1">Cell inner membrane</location>
        <topology evidence="1">Multi-pass membrane protein</topology>
    </subcellularLocation>
</comment>
<comment type="similarity">
    <text evidence="1">Belongs to the glycosyltransferase 4 family. MraY subfamily.</text>
</comment>
<name>MRAY_TRIL1</name>
<reference key="1">
    <citation type="submission" date="2008-05" db="EMBL/GenBank/DDBJ databases">
        <title>Complete sequence of chromosome of Geobacter lovleyi SZ.</title>
        <authorList>
            <consortium name="US DOE Joint Genome Institute"/>
            <person name="Lucas S."/>
            <person name="Copeland A."/>
            <person name="Lapidus A."/>
            <person name="Glavina del Rio T."/>
            <person name="Dalin E."/>
            <person name="Tice H."/>
            <person name="Bruce D."/>
            <person name="Goodwin L."/>
            <person name="Pitluck S."/>
            <person name="Chertkov O."/>
            <person name="Meincke L."/>
            <person name="Brettin T."/>
            <person name="Detter J.C."/>
            <person name="Han C."/>
            <person name="Tapia R."/>
            <person name="Kuske C.R."/>
            <person name="Schmutz J."/>
            <person name="Larimer F."/>
            <person name="Land M."/>
            <person name="Hauser L."/>
            <person name="Kyrpides N."/>
            <person name="Mikhailova N."/>
            <person name="Sung Y."/>
            <person name="Fletcher K.E."/>
            <person name="Ritalahti K.M."/>
            <person name="Loeffler F.E."/>
            <person name="Richardson P."/>
        </authorList>
    </citation>
    <scope>NUCLEOTIDE SEQUENCE [LARGE SCALE GENOMIC DNA]</scope>
    <source>
        <strain>ATCC BAA-1151 / DSM 17278 / SZ</strain>
    </source>
</reference>